<evidence type="ECO:0000256" key="1">
    <source>
        <dbReference type="SAM" id="MobiDB-lite"/>
    </source>
</evidence>
<evidence type="ECO:0000269" key="2">
    <source>
    </source>
</evidence>
<evidence type="ECO:0000303" key="3">
    <source>
    </source>
</evidence>
<evidence type="ECO:0000305" key="4"/>
<evidence type="ECO:0000305" key="5">
    <source>
    </source>
</evidence>
<gene>
    <name evidence="3" type="primary">vicR</name>
    <name type="ORF">COCVIDRAFT_43172</name>
</gene>
<sequence length="297" mass="32607">MSSPFQQILTTTSATNAIAASSAVPVECLHARGANSLASNAHTVLPGLDSQASPQSGQKEEMRRKNAEAQMQNDSNHSETTLFQSDLDTALQSLGYGSQTNQAYQNHPSRSREDITNSRAERHSQTSTQPKNVHAVSEPMATTSLDCGVLPLPSSALDEEFLNLDFPNQERIYIDLEPQHSNSTSSSSDEKCHCLSHIIQSLNRNRQGNHIRRDSMNKIHLLNEAAEQFLMCDSNHSKLWYIILLALYQDADDSLSSAEEPQERMGAHSGAKGFCGNIKSNLDTMVCHASLAWILNG</sequence>
<organism>
    <name type="scientific">Bipolaris victoriae (strain FI3)</name>
    <name type="common">Victoria blight of oats agent</name>
    <name type="synonym">Cochliobolus victoriae</name>
    <dbReference type="NCBI Taxonomy" id="930091"/>
    <lineage>
        <taxon>Eukaryota</taxon>
        <taxon>Fungi</taxon>
        <taxon>Dikarya</taxon>
        <taxon>Ascomycota</taxon>
        <taxon>Pezizomycotina</taxon>
        <taxon>Dothideomycetes</taxon>
        <taxon>Pleosporomycetidae</taxon>
        <taxon>Pleosporales</taxon>
        <taxon>Pleosporineae</taxon>
        <taxon>Pleosporaceae</taxon>
        <taxon>Bipolaris</taxon>
    </lineage>
</organism>
<feature type="chain" id="PRO_0000458404" description="Probable transcription factor vicR">
    <location>
        <begin position="1"/>
        <end position="297"/>
    </location>
</feature>
<feature type="region of interest" description="Disordered" evidence="1">
    <location>
        <begin position="45"/>
        <end position="80"/>
    </location>
</feature>
<feature type="region of interest" description="Disordered" evidence="1">
    <location>
        <begin position="100"/>
        <end position="134"/>
    </location>
</feature>
<feature type="compositionally biased region" description="Basic and acidic residues" evidence="1">
    <location>
        <begin position="58"/>
        <end position="67"/>
    </location>
</feature>
<feature type="compositionally biased region" description="Polar residues" evidence="1">
    <location>
        <begin position="69"/>
        <end position="80"/>
    </location>
</feature>
<feature type="compositionally biased region" description="Basic and acidic residues" evidence="1">
    <location>
        <begin position="110"/>
        <end position="124"/>
    </location>
</feature>
<name>VICR_BIPV3</name>
<dbReference type="EMBL" id="KI968912">
    <property type="protein sequence ID" value="EUN20675.1"/>
    <property type="molecule type" value="Genomic_DNA"/>
</dbReference>
<dbReference type="RefSeq" id="XP_014550249.1">
    <property type="nucleotide sequence ID" value="XM_014694763.1"/>
</dbReference>
<dbReference type="GeneID" id="26257481"/>
<dbReference type="HOGENOM" id="CLU_964888_0_0_1"/>
<dbReference type="Proteomes" id="UP000054337">
    <property type="component" value="Unassembled WGS sequence"/>
</dbReference>
<dbReference type="GO" id="GO:0005634">
    <property type="term" value="C:nucleus"/>
    <property type="evidence" value="ECO:0007669"/>
    <property type="project" value="UniProtKB-SubCell"/>
</dbReference>
<protein>
    <recommendedName>
        <fullName evidence="3">Probable transcription factor vicR</fullName>
    </recommendedName>
    <alternativeName>
        <fullName evidence="3">Victorin biosynthesis cluster protein T</fullName>
    </alternativeName>
</protein>
<reference key="1">
    <citation type="journal article" date="2013" name="PLoS Genet.">
        <title>Comparative genome structure, secondary metabolite, and effector coding capacity across Cochliobolus pathogens.</title>
        <authorList>
            <person name="Condon B.J."/>
            <person name="Leng Y."/>
            <person name="Wu D."/>
            <person name="Bushley K.E."/>
            <person name="Ohm R.A."/>
            <person name="Otillar R."/>
            <person name="Martin J."/>
            <person name="Schackwitz W."/>
            <person name="Grimwood J."/>
            <person name="MohdZainudin N."/>
            <person name="Xue C."/>
            <person name="Wang R."/>
            <person name="Manning V.A."/>
            <person name="Dhillon B."/>
            <person name="Tu Z.J."/>
            <person name="Steffenson B.J."/>
            <person name="Salamov A."/>
            <person name="Sun H."/>
            <person name="Lowry S."/>
            <person name="LaButti K."/>
            <person name="Han J."/>
            <person name="Copeland A."/>
            <person name="Lindquist E."/>
            <person name="Barry K."/>
            <person name="Schmutz J."/>
            <person name="Baker S.E."/>
            <person name="Ciuffetti L.M."/>
            <person name="Grigoriev I.V."/>
            <person name="Zhong S."/>
            <person name="Turgeon B.G."/>
        </authorList>
    </citation>
    <scope>NUCLEOTIDE SEQUENCE [LARGE SCALE GENOMIC DNA]</scope>
    <source>
        <strain>FI3</strain>
    </source>
</reference>
<reference key="2">
    <citation type="journal article" date="2020" name="Proc. Natl. Acad. Sci. U.S.A.">
        <title>Victorin, the host-selective cyclic peptide toxin from the oat pathogen Cochliobolus victoriae, is ribosomally encoded.</title>
        <authorList>
            <person name="Kessler S.C."/>
            <person name="Zhang X."/>
            <person name="McDonald M.C."/>
            <person name="Gilchrist C.L.M."/>
            <person name="Lin Z."/>
            <person name="Rightmyer A."/>
            <person name="Solomon P.S."/>
            <person name="Turgeon B.G."/>
            <person name="Chooi Y.H."/>
        </authorList>
    </citation>
    <scope>FUNCTION</scope>
</reference>
<comment type="function">
    <text evidence="2 5">Probable transcription factor; part of the gene cluster that mediates the biosynthesis of the secondary metabolite victorin, the molecular basis for Victoria blight of oats (PubMed:32929037). May play a role in the regulation of the production of victorin (Probable).</text>
</comment>
<comment type="subcellular location">
    <subcellularLocation>
        <location evidence="4">Nucleus</location>
    </subcellularLocation>
</comment>
<keyword id="KW-0539">Nucleus</keyword>
<keyword id="KW-0804">Transcription</keyword>
<keyword id="KW-0805">Transcription regulation</keyword>
<keyword id="KW-0843">Virulence</keyword>
<accession>W7E3X3</accession>
<proteinExistence type="predicted"/>